<feature type="signal peptide" evidence="1">
    <location>
        <begin position="1"/>
        <end position="30"/>
    </location>
</feature>
<feature type="chain" id="PRO_5000313992" description="Periplasmic trehalase">
    <location>
        <begin position="31"/>
        <end position="565"/>
    </location>
</feature>
<feature type="region of interest" description="Disordered" evidence="2">
    <location>
        <begin position="538"/>
        <end position="565"/>
    </location>
</feature>
<feature type="compositionally biased region" description="Polar residues" evidence="2">
    <location>
        <begin position="548"/>
        <end position="565"/>
    </location>
</feature>
<feature type="active site" description="Proton donor/acceptor" evidence="1">
    <location>
        <position position="312"/>
    </location>
</feature>
<feature type="active site" description="Proton donor/acceptor" evidence="1">
    <location>
        <position position="496"/>
    </location>
</feature>
<feature type="binding site" evidence="1">
    <location>
        <position position="152"/>
    </location>
    <ligand>
        <name>substrate</name>
    </ligand>
</feature>
<feature type="binding site" evidence="1">
    <location>
        <begin position="159"/>
        <end position="160"/>
    </location>
    <ligand>
        <name>substrate</name>
    </ligand>
</feature>
<feature type="binding site" evidence="1">
    <location>
        <position position="196"/>
    </location>
    <ligand>
        <name>substrate</name>
    </ligand>
</feature>
<feature type="binding site" evidence="1">
    <location>
        <begin position="205"/>
        <end position="207"/>
    </location>
    <ligand>
        <name>substrate</name>
    </ligand>
</feature>
<feature type="binding site" evidence="1">
    <location>
        <begin position="277"/>
        <end position="279"/>
    </location>
    <ligand>
        <name>substrate</name>
    </ligand>
</feature>
<feature type="binding site" evidence="1">
    <location>
        <position position="310"/>
    </location>
    <ligand>
        <name>substrate</name>
    </ligand>
</feature>
<feature type="binding site" evidence="1">
    <location>
        <position position="511"/>
    </location>
    <ligand>
        <name>substrate</name>
    </ligand>
</feature>
<keyword id="KW-0326">Glycosidase</keyword>
<keyword id="KW-0378">Hydrolase</keyword>
<keyword id="KW-0574">Periplasm</keyword>
<keyword id="KW-0732">Signal</keyword>
<name>TREA_ECOLC</name>
<evidence type="ECO:0000255" key="1">
    <source>
        <dbReference type="HAMAP-Rule" id="MF_01060"/>
    </source>
</evidence>
<evidence type="ECO:0000256" key="2">
    <source>
        <dbReference type="SAM" id="MobiDB-lite"/>
    </source>
</evidence>
<dbReference type="EC" id="3.2.1.28" evidence="1"/>
<dbReference type="EMBL" id="CP000946">
    <property type="protein sequence ID" value="ACA78063.1"/>
    <property type="molecule type" value="Genomic_DNA"/>
</dbReference>
<dbReference type="RefSeq" id="WP_000841714.1">
    <property type="nucleotide sequence ID" value="NZ_MTFT01000016.1"/>
</dbReference>
<dbReference type="SMR" id="B1IU96"/>
<dbReference type="CAZy" id="GH37">
    <property type="family name" value="Glycoside Hydrolase Family 37"/>
</dbReference>
<dbReference type="KEGG" id="ecl:EcolC_2429"/>
<dbReference type="HOGENOM" id="CLU_006451_3_1_6"/>
<dbReference type="GO" id="GO:0042597">
    <property type="term" value="C:periplasmic space"/>
    <property type="evidence" value="ECO:0007669"/>
    <property type="project" value="UniProtKB-SubCell"/>
</dbReference>
<dbReference type="GO" id="GO:0004555">
    <property type="term" value="F:alpha,alpha-trehalase activity"/>
    <property type="evidence" value="ECO:0007669"/>
    <property type="project" value="UniProtKB-UniRule"/>
</dbReference>
<dbReference type="GO" id="GO:0071474">
    <property type="term" value="P:cellular hyperosmotic response"/>
    <property type="evidence" value="ECO:0007669"/>
    <property type="project" value="InterPro"/>
</dbReference>
<dbReference type="GO" id="GO:0005993">
    <property type="term" value="P:trehalose catabolic process"/>
    <property type="evidence" value="ECO:0007669"/>
    <property type="project" value="InterPro"/>
</dbReference>
<dbReference type="FunFam" id="1.50.10.10:FF:000003">
    <property type="entry name" value="Cytoplasmic trehalase"/>
    <property type="match status" value="1"/>
</dbReference>
<dbReference type="Gene3D" id="1.50.10.10">
    <property type="match status" value="1"/>
</dbReference>
<dbReference type="HAMAP" id="MF_01060">
    <property type="entry name" value="Peripl_trehalase"/>
    <property type="match status" value="1"/>
</dbReference>
<dbReference type="InterPro" id="IPR008928">
    <property type="entry name" value="6-hairpin_glycosidase_sf"/>
</dbReference>
<dbReference type="InterPro" id="IPR012341">
    <property type="entry name" value="6hp_glycosidase-like_sf"/>
</dbReference>
<dbReference type="InterPro" id="IPR001661">
    <property type="entry name" value="Glyco_hydro_37"/>
</dbReference>
<dbReference type="InterPro" id="IPR018232">
    <property type="entry name" value="Glyco_hydro_37_CS"/>
</dbReference>
<dbReference type="InterPro" id="IPR023720">
    <property type="entry name" value="Trehalase_periplasmic"/>
</dbReference>
<dbReference type="NCBIfam" id="NF009773">
    <property type="entry name" value="PRK13270.1"/>
    <property type="match status" value="1"/>
</dbReference>
<dbReference type="NCBIfam" id="NF009774">
    <property type="entry name" value="PRK13271.1"/>
    <property type="match status" value="1"/>
</dbReference>
<dbReference type="PANTHER" id="PTHR23403">
    <property type="entry name" value="TREHALASE"/>
    <property type="match status" value="1"/>
</dbReference>
<dbReference type="PANTHER" id="PTHR23403:SF1">
    <property type="entry name" value="TREHALASE"/>
    <property type="match status" value="1"/>
</dbReference>
<dbReference type="Pfam" id="PF01204">
    <property type="entry name" value="Trehalase"/>
    <property type="match status" value="1"/>
</dbReference>
<dbReference type="PRINTS" id="PR00744">
    <property type="entry name" value="GLHYDRLASE37"/>
</dbReference>
<dbReference type="SUPFAM" id="SSF48208">
    <property type="entry name" value="Six-hairpin glycosidases"/>
    <property type="match status" value="1"/>
</dbReference>
<dbReference type="PROSITE" id="PS00927">
    <property type="entry name" value="TREHALASE_1"/>
    <property type="match status" value="1"/>
</dbReference>
<dbReference type="PROSITE" id="PS00928">
    <property type="entry name" value="TREHALASE_2"/>
    <property type="match status" value="1"/>
</dbReference>
<gene>
    <name evidence="1" type="primary">treA</name>
    <name type="ordered locus">EcolC_2429</name>
</gene>
<accession>B1IU96</accession>
<reference key="1">
    <citation type="submission" date="2008-02" db="EMBL/GenBank/DDBJ databases">
        <title>Complete sequence of Escherichia coli C str. ATCC 8739.</title>
        <authorList>
            <person name="Copeland A."/>
            <person name="Lucas S."/>
            <person name="Lapidus A."/>
            <person name="Glavina del Rio T."/>
            <person name="Dalin E."/>
            <person name="Tice H."/>
            <person name="Bruce D."/>
            <person name="Goodwin L."/>
            <person name="Pitluck S."/>
            <person name="Kiss H."/>
            <person name="Brettin T."/>
            <person name="Detter J.C."/>
            <person name="Han C."/>
            <person name="Kuske C.R."/>
            <person name="Schmutz J."/>
            <person name="Larimer F."/>
            <person name="Land M."/>
            <person name="Hauser L."/>
            <person name="Kyrpides N."/>
            <person name="Mikhailova N."/>
            <person name="Ingram L."/>
            <person name="Richardson P."/>
        </authorList>
    </citation>
    <scope>NUCLEOTIDE SEQUENCE [LARGE SCALE GENOMIC DNA]</scope>
    <source>
        <strain>ATCC 8739 / DSM 1576 / NBRC 3972 / NCIMB 8545 / WDCM 00012 / Crooks</strain>
    </source>
</reference>
<comment type="function">
    <text evidence="1">Provides the cells with the ability to utilize trehalose at high osmolarity by splitting it into glucose molecules that can subsequently be taken up by the phosphotransferase-mediated uptake system.</text>
</comment>
<comment type="catalytic activity">
    <reaction evidence="1">
        <text>alpha,alpha-trehalose + H2O = alpha-D-glucose + beta-D-glucose</text>
        <dbReference type="Rhea" id="RHEA:32675"/>
        <dbReference type="ChEBI" id="CHEBI:15377"/>
        <dbReference type="ChEBI" id="CHEBI:15903"/>
        <dbReference type="ChEBI" id="CHEBI:16551"/>
        <dbReference type="ChEBI" id="CHEBI:17925"/>
        <dbReference type="EC" id="3.2.1.28"/>
    </reaction>
</comment>
<comment type="subunit">
    <text evidence="1">Monomer.</text>
</comment>
<comment type="subcellular location">
    <subcellularLocation>
        <location evidence="1">Periplasm</location>
    </subcellularLocation>
</comment>
<comment type="similarity">
    <text evidence="1">Belongs to the glycosyl hydrolase 37 family.</text>
</comment>
<protein>
    <recommendedName>
        <fullName evidence="1">Periplasmic trehalase</fullName>
        <ecNumber evidence="1">3.2.1.28</ecNumber>
    </recommendedName>
    <alternativeName>
        <fullName evidence="1">Alpha,alpha-trehalase</fullName>
    </alternativeName>
    <alternativeName>
        <fullName evidence="1">Alpha,alpha-trehalose glucohydrolase</fullName>
    </alternativeName>
</protein>
<proteinExistence type="inferred from homology"/>
<organism>
    <name type="scientific">Escherichia coli (strain ATCC 8739 / DSM 1576 / NBRC 3972 / NCIMB 8545 / WDCM 00012 / Crooks)</name>
    <dbReference type="NCBI Taxonomy" id="481805"/>
    <lineage>
        <taxon>Bacteria</taxon>
        <taxon>Pseudomonadati</taxon>
        <taxon>Pseudomonadota</taxon>
        <taxon>Gammaproteobacteria</taxon>
        <taxon>Enterobacterales</taxon>
        <taxon>Enterobacteriaceae</taxon>
        <taxon>Escherichia</taxon>
    </lineage>
</organism>
<sequence length="565" mass="63637">MKSPAPSRPQKMALIPACIFLCFAALSVQAEETPVTPQPPDILLGPLFNDVQNAKLFPDQKTFADAVPNSDPLMILADYRMQQNQSGFDLRHFVNVNFTLPKEGEKYVPPEGQSLREHIDGLWPVLTRSTENTEKWDSLLPLPEPYVVPGGRFREVYYWDSYFTMLGLAESGHWDKVADMVANFAHEIDTYGHIPNGNRSYYLSRSQPPFFALMVELLAQHEGDAALKQYLPQMQKEYAYWMDGVENLQAGQQEKRVVKLQDGTLLNRYWDDRDTPRPESWVEDIATAKSNPNRPATEIYRDLRSAAASGWDFSSRWMDNPQQLNTLRTTSIVPVDLNSLMFKMEKILARASKAAGDNAMANQYETLANARQKGIEKYLWNDQQGWYADYDLKSHKVRNQLTAAALFPLYVNAAAKDRANKMATATKTHLLQPGGLNTTSVKSGQQWDAPNGWAPLQWVATEGLQNYGQKEVAMDISWHFLTNVQHTYDREKKLVEKYDVSTTGTGGGGGEYPLQDGFGWTNGVTLKMLDLICPKEQPCDNVPATRPTVKSATTQPSTKEAQPTP</sequence>